<comment type="alternative products">
    <event type="alternative splicing"/>
    <isoform>
        <id>Q9ZUN0-1</id>
        <name>1</name>
        <sequence type="displayed"/>
    </isoform>
    <text>A number of isoforms are produced. According to EST sequences.</text>
</comment>
<protein>
    <recommendedName>
        <fullName>Putative F-box protein At2g19630</fullName>
    </recommendedName>
</protein>
<dbReference type="EMBL" id="AC005917">
    <property type="protein sequence ID" value="AAD10161.1"/>
    <property type="molecule type" value="Genomic_DNA"/>
</dbReference>
<dbReference type="EMBL" id="CP002685">
    <property type="protein sequence ID" value="AEC06904.1"/>
    <property type="molecule type" value="Genomic_DNA"/>
</dbReference>
<dbReference type="PIR" id="B84579">
    <property type="entry name" value="B84579"/>
</dbReference>
<dbReference type="RefSeq" id="NP_179553.1">
    <molecule id="Q9ZUN0-1"/>
    <property type="nucleotide sequence ID" value="NM_127521.1"/>
</dbReference>
<dbReference type="FunCoup" id="Q9ZUN0">
    <property type="interactions" value="10"/>
</dbReference>
<dbReference type="iPTMnet" id="Q9ZUN0"/>
<dbReference type="PaxDb" id="3702-AT2G19630.1"/>
<dbReference type="EnsemblPlants" id="AT2G19630.1">
    <molecule id="Q9ZUN0-1"/>
    <property type="protein sequence ID" value="AT2G19630.1"/>
    <property type="gene ID" value="AT2G19630"/>
</dbReference>
<dbReference type="GeneID" id="816482"/>
<dbReference type="Gramene" id="AT2G19630.1">
    <molecule id="Q9ZUN0-1"/>
    <property type="protein sequence ID" value="AT2G19630.1"/>
    <property type="gene ID" value="AT2G19630"/>
</dbReference>
<dbReference type="KEGG" id="ath:AT2G19630"/>
<dbReference type="Araport" id="AT2G19630"/>
<dbReference type="TAIR" id="AT2G19630"/>
<dbReference type="eggNOG" id="ENOG502SNHU">
    <property type="taxonomic scope" value="Eukaryota"/>
</dbReference>
<dbReference type="HOGENOM" id="CLU_027176_8_3_1"/>
<dbReference type="InParanoid" id="Q9ZUN0"/>
<dbReference type="OMA" id="NFGRTMH"/>
<dbReference type="OrthoDB" id="1024037at2759"/>
<dbReference type="PhylomeDB" id="Q9ZUN0"/>
<dbReference type="PRO" id="PR:Q9ZUN0"/>
<dbReference type="Proteomes" id="UP000006548">
    <property type="component" value="Chromosome 2"/>
</dbReference>
<dbReference type="ExpressionAtlas" id="Q9ZUN0">
    <property type="expression patterns" value="baseline and differential"/>
</dbReference>
<dbReference type="CDD" id="cd22157">
    <property type="entry name" value="F-box_AtFBW1-like"/>
    <property type="match status" value="1"/>
</dbReference>
<dbReference type="Gene3D" id="1.20.1280.50">
    <property type="match status" value="1"/>
</dbReference>
<dbReference type="InterPro" id="IPR013187">
    <property type="entry name" value="F-box-assoc_dom_typ3"/>
</dbReference>
<dbReference type="InterPro" id="IPR017451">
    <property type="entry name" value="F-box-assoc_interact_dom"/>
</dbReference>
<dbReference type="InterPro" id="IPR036047">
    <property type="entry name" value="F-box-like_dom_sf"/>
</dbReference>
<dbReference type="InterPro" id="IPR001810">
    <property type="entry name" value="F-box_dom"/>
</dbReference>
<dbReference type="NCBIfam" id="TIGR01640">
    <property type="entry name" value="F_box_assoc_1"/>
    <property type="match status" value="1"/>
</dbReference>
<dbReference type="PANTHER" id="PTHR31111">
    <property type="entry name" value="BNAA05G37150D PROTEIN-RELATED"/>
    <property type="match status" value="1"/>
</dbReference>
<dbReference type="PANTHER" id="PTHR31111:SF94">
    <property type="entry name" value="E3 UBIQUITIN-PROTEIN LIGASE SGIP1"/>
    <property type="match status" value="1"/>
</dbReference>
<dbReference type="Pfam" id="PF00646">
    <property type="entry name" value="F-box"/>
    <property type="match status" value="1"/>
</dbReference>
<dbReference type="Pfam" id="PF08268">
    <property type="entry name" value="FBA_3"/>
    <property type="match status" value="1"/>
</dbReference>
<dbReference type="SMART" id="SM00256">
    <property type="entry name" value="FBOX"/>
    <property type="match status" value="1"/>
</dbReference>
<dbReference type="SUPFAM" id="SSF81383">
    <property type="entry name" value="F-box domain"/>
    <property type="match status" value="1"/>
</dbReference>
<proteinExistence type="predicted"/>
<sequence length="297" mass="34670">MKTSLRLEDGTKNSLQIPIDLIIEIFLRLSVNSIARCRCVSKQWASTLSRPYFTELFLTRSLARPKLLFAYRKGSDYLFLSSPQLQNPDDDHKKSSPVVVNYHMHHILTLGSGNMSWRTIQCCIPHRSFDGGICIDGLIYYYAGVNNNDIVIVCFDVRSEEFRFIIGALHHGSLINYNGKLSLYLPSTVYSRFNGVIRSIKLWVLEDAKRQEWSEHTYILPAMHDIMKTTDLRCVGMTQTKEFVFWSIKGMRFYVFYYNIERNTIKKVEMQGMEAFKESNVYTFLDHVEDVKLMQFF</sequence>
<organism>
    <name type="scientific">Arabidopsis thaliana</name>
    <name type="common">Mouse-ear cress</name>
    <dbReference type="NCBI Taxonomy" id="3702"/>
    <lineage>
        <taxon>Eukaryota</taxon>
        <taxon>Viridiplantae</taxon>
        <taxon>Streptophyta</taxon>
        <taxon>Embryophyta</taxon>
        <taxon>Tracheophyta</taxon>
        <taxon>Spermatophyta</taxon>
        <taxon>Magnoliopsida</taxon>
        <taxon>eudicotyledons</taxon>
        <taxon>Gunneridae</taxon>
        <taxon>Pentapetalae</taxon>
        <taxon>rosids</taxon>
        <taxon>malvids</taxon>
        <taxon>Brassicales</taxon>
        <taxon>Brassicaceae</taxon>
        <taxon>Camelineae</taxon>
        <taxon>Arabidopsis</taxon>
    </lineage>
</organism>
<keyword id="KW-0025">Alternative splicing</keyword>
<keyword id="KW-1185">Reference proteome</keyword>
<gene>
    <name type="ordered locus">At2g19630</name>
    <name type="ORF">F3P11.23</name>
</gene>
<name>FB113_ARATH</name>
<feature type="chain" id="PRO_0000283384" description="Putative F-box protein At2g19630">
    <location>
        <begin position="1"/>
        <end position="297"/>
    </location>
</feature>
<feature type="domain" description="F-box">
    <location>
        <begin position="11"/>
        <end position="60"/>
    </location>
</feature>
<reference key="1">
    <citation type="journal article" date="1999" name="Nature">
        <title>Sequence and analysis of chromosome 2 of the plant Arabidopsis thaliana.</title>
        <authorList>
            <person name="Lin X."/>
            <person name="Kaul S."/>
            <person name="Rounsley S.D."/>
            <person name="Shea T.P."/>
            <person name="Benito M.-I."/>
            <person name="Town C.D."/>
            <person name="Fujii C.Y."/>
            <person name="Mason T.M."/>
            <person name="Bowman C.L."/>
            <person name="Barnstead M.E."/>
            <person name="Feldblyum T.V."/>
            <person name="Buell C.R."/>
            <person name="Ketchum K.A."/>
            <person name="Lee J.J."/>
            <person name="Ronning C.M."/>
            <person name="Koo H.L."/>
            <person name="Moffat K.S."/>
            <person name="Cronin L.A."/>
            <person name="Shen M."/>
            <person name="Pai G."/>
            <person name="Van Aken S."/>
            <person name="Umayam L."/>
            <person name="Tallon L.J."/>
            <person name="Gill J.E."/>
            <person name="Adams M.D."/>
            <person name="Carrera A.J."/>
            <person name="Creasy T.H."/>
            <person name="Goodman H.M."/>
            <person name="Somerville C.R."/>
            <person name="Copenhaver G.P."/>
            <person name="Preuss D."/>
            <person name="Nierman W.C."/>
            <person name="White O."/>
            <person name="Eisen J.A."/>
            <person name="Salzberg S.L."/>
            <person name="Fraser C.M."/>
            <person name="Venter J.C."/>
        </authorList>
    </citation>
    <scope>NUCLEOTIDE SEQUENCE [LARGE SCALE GENOMIC DNA]</scope>
    <source>
        <strain>cv. Columbia</strain>
    </source>
</reference>
<reference key="2">
    <citation type="journal article" date="2017" name="Plant J.">
        <title>Araport11: a complete reannotation of the Arabidopsis thaliana reference genome.</title>
        <authorList>
            <person name="Cheng C.Y."/>
            <person name="Krishnakumar V."/>
            <person name="Chan A.P."/>
            <person name="Thibaud-Nissen F."/>
            <person name="Schobel S."/>
            <person name="Town C.D."/>
        </authorList>
    </citation>
    <scope>GENOME REANNOTATION</scope>
    <source>
        <strain>cv. Columbia</strain>
    </source>
</reference>
<accession>Q9ZUN0</accession>